<protein>
    <recommendedName>
        <fullName evidence="1">2S seed storage albumin protein</fullName>
    </recommendedName>
    <alternativeName>
        <fullName>Matteuccin</fullName>
    </alternativeName>
    <component>
        <recommendedName>
            <fullName>Matteuccin light chain</fullName>
        </recommendedName>
    </component>
    <component>
        <recommendedName>
            <fullName>Matteuccin heavy chain</fullName>
        </recommendedName>
    </component>
</protein>
<dbReference type="PIR" id="S11350">
    <property type="entry name" value="S11350"/>
</dbReference>
<dbReference type="PIR" id="S11351">
    <property type="entry name" value="S11351"/>
</dbReference>
<dbReference type="SMR" id="P17718"/>
<dbReference type="GO" id="GO:0033095">
    <property type="term" value="C:aleurone grain"/>
    <property type="evidence" value="ECO:0007669"/>
    <property type="project" value="UniProtKB-SubCell"/>
</dbReference>
<dbReference type="GO" id="GO:0005773">
    <property type="term" value="C:vacuole"/>
    <property type="evidence" value="ECO:0007669"/>
    <property type="project" value="UniProtKB-KW"/>
</dbReference>
<dbReference type="GO" id="GO:0045735">
    <property type="term" value="F:nutrient reservoir activity"/>
    <property type="evidence" value="ECO:0007669"/>
    <property type="project" value="UniProtKB-KW"/>
</dbReference>
<accession>P17718</accession>
<comment type="function">
    <text>This is a 2S seed storage protein.</text>
</comment>
<comment type="subunit">
    <text>Heterodimer of a small and a large chain linked by disulfide bonds.</text>
</comment>
<comment type="subcellular location">
    <subcellularLocation>
        <location>Vacuole</location>
        <location>Aleurone grain</location>
    </subcellularLocation>
</comment>
<comment type="similarity">
    <text evidence="1">Belongs to the 2S seed storage albumins family.</text>
</comment>
<name>2SS_MATST</name>
<sequence length="67" mass="7961">DQASMQRASRLLHQCDLRPRDCARRSSERGQGERWRQQLRACDEDSEPRQQCCQNLQRISSQDRCRA</sequence>
<organism>
    <name type="scientific">Matteuccia struthiopteris</name>
    <name type="common">European ostrich fern</name>
    <name type="synonym">Osmunda struthiopteris</name>
    <dbReference type="NCBI Taxonomy" id="3277"/>
    <lineage>
        <taxon>Eukaryota</taxon>
        <taxon>Viridiplantae</taxon>
        <taxon>Streptophyta</taxon>
        <taxon>Embryophyta</taxon>
        <taxon>Tracheophyta</taxon>
        <taxon>Polypodiopsida</taxon>
        <taxon>Polypodiidae</taxon>
        <taxon>Polypodiales</taxon>
        <taxon>Aspleniineae</taxon>
        <taxon>Onocleaceae</taxon>
        <taxon>Matteuccia</taxon>
    </lineage>
</organism>
<proteinExistence type="evidence at protein level"/>
<reference key="1">
    <citation type="journal article" date="1990" name="Eur. J. Biochem.">
        <title>Characterization of matteuccin, the 2.2S storage protein of the ostrich fern. Evolutionary relationship to angiosperm seed storage proteins.</title>
        <authorList>
            <person name="Roedin J."/>
            <person name="Rask L."/>
        </authorList>
    </citation>
    <scope>PROTEIN SEQUENCE</scope>
    <source>
        <tissue>Spore</tissue>
    </source>
</reference>
<keyword id="KW-0165">Cleavage on pair of basic residues</keyword>
<keyword id="KW-0903">Direct protein sequencing</keyword>
<keyword id="KW-1015">Disulfide bond</keyword>
<keyword id="KW-0708">Seed storage protein</keyword>
<keyword id="KW-0758">Storage protein</keyword>
<keyword id="KW-0926">Vacuole</keyword>
<evidence type="ECO:0000305" key="1"/>
<feature type="chain" id="PRO_0000032155" description="Matteuccin light chain">
    <location>
        <begin position="1"/>
        <end position="25" status="greater than"/>
    </location>
</feature>
<feature type="chain" id="PRO_0000032156" description="Matteuccin heavy chain">
    <location>
        <begin position="26"/>
        <end position="67" status="greater than"/>
    </location>
</feature>
<feature type="non-consecutive residues" evidence="1">
    <location>
        <begin position="25"/>
        <end position="26"/>
    </location>
</feature>
<feature type="non-consecutive residues" evidence="1">
    <location>
        <begin position="54"/>
        <end position="55"/>
    </location>
</feature>
<feature type="non-terminal residue">
    <location>
        <position position="67"/>
    </location>
</feature>